<accession>A0Q4H7</accession>
<dbReference type="EC" id="3.6.1.23" evidence="1"/>
<dbReference type="EMBL" id="CP000439">
    <property type="protein sequence ID" value="ABK89142.1"/>
    <property type="molecule type" value="Genomic_DNA"/>
</dbReference>
<dbReference type="RefSeq" id="WP_003017689.1">
    <property type="nucleotide sequence ID" value="NZ_CP009633.1"/>
</dbReference>
<dbReference type="SMR" id="A0Q4H7"/>
<dbReference type="KEGG" id="ftn:FTN_0233"/>
<dbReference type="KEGG" id="ftx:AW25_1809"/>
<dbReference type="BioCyc" id="FTUL401614:G1G75-244-MONOMER"/>
<dbReference type="UniPathway" id="UPA00610">
    <property type="reaction ID" value="UER00666"/>
</dbReference>
<dbReference type="Proteomes" id="UP000000762">
    <property type="component" value="Chromosome"/>
</dbReference>
<dbReference type="GO" id="GO:0004170">
    <property type="term" value="F:dUTP diphosphatase activity"/>
    <property type="evidence" value="ECO:0007669"/>
    <property type="project" value="UniProtKB-UniRule"/>
</dbReference>
<dbReference type="GO" id="GO:0000287">
    <property type="term" value="F:magnesium ion binding"/>
    <property type="evidence" value="ECO:0007669"/>
    <property type="project" value="UniProtKB-UniRule"/>
</dbReference>
<dbReference type="GO" id="GO:0006226">
    <property type="term" value="P:dUMP biosynthetic process"/>
    <property type="evidence" value="ECO:0007669"/>
    <property type="project" value="UniProtKB-UniRule"/>
</dbReference>
<dbReference type="GO" id="GO:0046081">
    <property type="term" value="P:dUTP catabolic process"/>
    <property type="evidence" value="ECO:0007669"/>
    <property type="project" value="InterPro"/>
</dbReference>
<dbReference type="CDD" id="cd07557">
    <property type="entry name" value="trimeric_dUTPase"/>
    <property type="match status" value="1"/>
</dbReference>
<dbReference type="FunFam" id="2.70.40.10:FF:000002">
    <property type="entry name" value="dUTP diphosphatase"/>
    <property type="match status" value="1"/>
</dbReference>
<dbReference type="Gene3D" id="2.70.40.10">
    <property type="match status" value="1"/>
</dbReference>
<dbReference type="HAMAP" id="MF_00116">
    <property type="entry name" value="dUTPase_bact"/>
    <property type="match status" value="1"/>
</dbReference>
<dbReference type="InterPro" id="IPR008181">
    <property type="entry name" value="dUTPase"/>
</dbReference>
<dbReference type="InterPro" id="IPR029054">
    <property type="entry name" value="dUTPase-like"/>
</dbReference>
<dbReference type="InterPro" id="IPR036157">
    <property type="entry name" value="dUTPase-like_sf"/>
</dbReference>
<dbReference type="InterPro" id="IPR033704">
    <property type="entry name" value="dUTPase_trimeric"/>
</dbReference>
<dbReference type="NCBIfam" id="TIGR00576">
    <property type="entry name" value="dut"/>
    <property type="match status" value="1"/>
</dbReference>
<dbReference type="NCBIfam" id="NF001862">
    <property type="entry name" value="PRK00601.1"/>
    <property type="match status" value="1"/>
</dbReference>
<dbReference type="PANTHER" id="PTHR11241">
    <property type="entry name" value="DEOXYURIDINE 5'-TRIPHOSPHATE NUCLEOTIDOHYDROLASE"/>
    <property type="match status" value="1"/>
</dbReference>
<dbReference type="PANTHER" id="PTHR11241:SF0">
    <property type="entry name" value="DEOXYURIDINE 5'-TRIPHOSPHATE NUCLEOTIDOHYDROLASE"/>
    <property type="match status" value="1"/>
</dbReference>
<dbReference type="Pfam" id="PF00692">
    <property type="entry name" value="dUTPase"/>
    <property type="match status" value="1"/>
</dbReference>
<dbReference type="SUPFAM" id="SSF51283">
    <property type="entry name" value="dUTPase-like"/>
    <property type="match status" value="1"/>
</dbReference>
<comment type="function">
    <text evidence="1">This enzyme is involved in nucleotide metabolism: it produces dUMP, the immediate precursor of thymidine nucleotides and it decreases the intracellular concentration of dUTP so that uracil cannot be incorporated into DNA.</text>
</comment>
<comment type="catalytic activity">
    <reaction evidence="1">
        <text>dUTP + H2O = dUMP + diphosphate + H(+)</text>
        <dbReference type="Rhea" id="RHEA:10248"/>
        <dbReference type="ChEBI" id="CHEBI:15377"/>
        <dbReference type="ChEBI" id="CHEBI:15378"/>
        <dbReference type="ChEBI" id="CHEBI:33019"/>
        <dbReference type="ChEBI" id="CHEBI:61555"/>
        <dbReference type="ChEBI" id="CHEBI:246422"/>
        <dbReference type="EC" id="3.6.1.23"/>
    </reaction>
</comment>
<comment type="cofactor">
    <cofactor evidence="1">
        <name>Mg(2+)</name>
        <dbReference type="ChEBI" id="CHEBI:18420"/>
    </cofactor>
</comment>
<comment type="pathway">
    <text evidence="1">Pyrimidine metabolism; dUMP biosynthesis; dUMP from dCTP (dUTP route): step 2/2.</text>
</comment>
<comment type="similarity">
    <text evidence="1">Belongs to the dUTPase family.</text>
</comment>
<organism>
    <name type="scientific">Francisella tularensis subsp. novicida (strain U112)</name>
    <dbReference type="NCBI Taxonomy" id="401614"/>
    <lineage>
        <taxon>Bacteria</taxon>
        <taxon>Pseudomonadati</taxon>
        <taxon>Pseudomonadota</taxon>
        <taxon>Gammaproteobacteria</taxon>
        <taxon>Thiotrichales</taxon>
        <taxon>Francisellaceae</taxon>
        <taxon>Francisella</taxon>
    </lineage>
</organism>
<name>DUT_FRATN</name>
<gene>
    <name evidence="1" type="primary">dut</name>
    <name type="ordered locus">FTN_0233</name>
</gene>
<keyword id="KW-0378">Hydrolase</keyword>
<keyword id="KW-0460">Magnesium</keyword>
<keyword id="KW-0479">Metal-binding</keyword>
<keyword id="KW-0546">Nucleotide metabolism</keyword>
<sequence length="148" mass="15942">MKVELKILNKELIKELPGYATEGSAAIDLRACISESIYLKSGECKLVATGIAINIANPNYAAMILPRSGLGHKKGLVLGNGTGLIDSDYQGELMVSCFNRSQETIEIEPLMRFAQLVIVPVVQANFEIVEDFSQQSVRATGGFGHTGV</sequence>
<feature type="chain" id="PRO_1000015470" description="Deoxyuridine 5'-triphosphate nucleotidohydrolase">
    <location>
        <begin position="1"/>
        <end position="148"/>
    </location>
</feature>
<feature type="binding site" evidence="1">
    <location>
        <begin position="67"/>
        <end position="69"/>
    </location>
    <ligand>
        <name>substrate</name>
    </ligand>
</feature>
<feature type="binding site" evidence="1">
    <location>
        <position position="80"/>
    </location>
    <ligand>
        <name>substrate</name>
    </ligand>
</feature>
<feature type="binding site" evidence="1">
    <location>
        <begin position="84"/>
        <end position="86"/>
    </location>
    <ligand>
        <name>substrate</name>
    </ligand>
</feature>
<feature type="binding site" evidence="1">
    <location>
        <position position="94"/>
    </location>
    <ligand>
        <name>substrate</name>
    </ligand>
</feature>
<evidence type="ECO:0000255" key="1">
    <source>
        <dbReference type="HAMAP-Rule" id="MF_00116"/>
    </source>
</evidence>
<reference key="1">
    <citation type="journal article" date="2007" name="Genome Biol.">
        <title>Comparison of Francisella tularensis genomes reveals evolutionary events associated with the emergence of human pathogenic strains.</title>
        <authorList>
            <person name="Rohmer L."/>
            <person name="Fong C."/>
            <person name="Abmayr S."/>
            <person name="Wasnick M."/>
            <person name="Larson Freeman T.J."/>
            <person name="Radey M."/>
            <person name="Guina T."/>
            <person name="Svensson K."/>
            <person name="Hayden H.S."/>
            <person name="Jacobs M."/>
            <person name="Gallagher L.A."/>
            <person name="Manoil C."/>
            <person name="Ernst R.K."/>
            <person name="Drees B."/>
            <person name="Buckley D."/>
            <person name="Haugen E."/>
            <person name="Bovee D."/>
            <person name="Zhou Y."/>
            <person name="Chang J."/>
            <person name="Levy R."/>
            <person name="Lim R."/>
            <person name="Gillett W."/>
            <person name="Guenthener D."/>
            <person name="Kang A."/>
            <person name="Shaffer S.A."/>
            <person name="Taylor G."/>
            <person name="Chen J."/>
            <person name="Gallis B."/>
            <person name="D'Argenio D.A."/>
            <person name="Forsman M."/>
            <person name="Olson M.V."/>
            <person name="Goodlett D.R."/>
            <person name="Kaul R."/>
            <person name="Miller S.I."/>
            <person name="Brittnacher M.J."/>
        </authorList>
    </citation>
    <scope>NUCLEOTIDE SEQUENCE [LARGE SCALE GENOMIC DNA]</scope>
    <source>
        <strain>U112</strain>
    </source>
</reference>
<proteinExistence type="inferred from homology"/>
<protein>
    <recommendedName>
        <fullName evidence="1">Deoxyuridine 5'-triphosphate nucleotidohydrolase</fullName>
        <shortName evidence="1">dUTPase</shortName>
        <ecNumber evidence="1">3.6.1.23</ecNumber>
    </recommendedName>
    <alternativeName>
        <fullName evidence="1">dUTP pyrophosphatase</fullName>
    </alternativeName>
</protein>